<feature type="chain" id="PRO_1000115567" description="Trigger factor">
    <location>
        <begin position="1"/>
        <end position="434"/>
    </location>
</feature>
<feature type="domain" description="PPIase FKBP-type" evidence="1">
    <location>
        <begin position="161"/>
        <end position="246"/>
    </location>
</feature>
<keyword id="KW-0131">Cell cycle</keyword>
<keyword id="KW-0132">Cell division</keyword>
<keyword id="KW-0143">Chaperone</keyword>
<keyword id="KW-0963">Cytoplasm</keyword>
<keyword id="KW-0413">Isomerase</keyword>
<keyword id="KW-1185">Reference proteome</keyword>
<keyword id="KW-0697">Rotamase</keyword>
<reference key="1">
    <citation type="journal article" date="2008" name="J. Bacteriol.">
        <title>Complete genome sequence of uropathogenic Proteus mirabilis, a master of both adherence and motility.</title>
        <authorList>
            <person name="Pearson M.M."/>
            <person name="Sebaihia M."/>
            <person name="Churcher C."/>
            <person name="Quail M.A."/>
            <person name="Seshasayee A.S."/>
            <person name="Luscombe N.M."/>
            <person name="Abdellah Z."/>
            <person name="Arrosmith C."/>
            <person name="Atkin B."/>
            <person name="Chillingworth T."/>
            <person name="Hauser H."/>
            <person name="Jagels K."/>
            <person name="Moule S."/>
            <person name="Mungall K."/>
            <person name="Norbertczak H."/>
            <person name="Rabbinowitsch E."/>
            <person name="Walker D."/>
            <person name="Whithead S."/>
            <person name="Thomson N.R."/>
            <person name="Rather P.N."/>
            <person name="Parkhill J."/>
            <person name="Mobley H.L.T."/>
        </authorList>
    </citation>
    <scope>NUCLEOTIDE SEQUENCE [LARGE SCALE GENOMIC DNA]</scope>
    <source>
        <strain>HI4320</strain>
    </source>
</reference>
<proteinExistence type="inferred from homology"/>
<gene>
    <name evidence="1" type="primary">tig</name>
    <name type="ordered locus">PMI0114</name>
</gene>
<dbReference type="EC" id="5.2.1.8" evidence="1"/>
<dbReference type="EMBL" id="AM942759">
    <property type="protein sequence ID" value="CAR40390.1"/>
    <property type="molecule type" value="Genomic_DNA"/>
</dbReference>
<dbReference type="RefSeq" id="WP_004245089.1">
    <property type="nucleotide sequence ID" value="NC_010554.1"/>
</dbReference>
<dbReference type="SMR" id="B4EU52"/>
<dbReference type="EnsemblBacteria" id="CAR40390">
    <property type="protein sequence ID" value="CAR40390"/>
    <property type="gene ID" value="PMI0114"/>
</dbReference>
<dbReference type="GeneID" id="6802059"/>
<dbReference type="KEGG" id="pmr:PMI0114"/>
<dbReference type="eggNOG" id="COG0544">
    <property type="taxonomic scope" value="Bacteria"/>
</dbReference>
<dbReference type="HOGENOM" id="CLU_033058_2_0_6"/>
<dbReference type="Proteomes" id="UP000008319">
    <property type="component" value="Chromosome"/>
</dbReference>
<dbReference type="GO" id="GO:0005737">
    <property type="term" value="C:cytoplasm"/>
    <property type="evidence" value="ECO:0007669"/>
    <property type="project" value="UniProtKB-SubCell"/>
</dbReference>
<dbReference type="GO" id="GO:0003755">
    <property type="term" value="F:peptidyl-prolyl cis-trans isomerase activity"/>
    <property type="evidence" value="ECO:0007669"/>
    <property type="project" value="UniProtKB-UniRule"/>
</dbReference>
<dbReference type="GO" id="GO:0044183">
    <property type="term" value="F:protein folding chaperone"/>
    <property type="evidence" value="ECO:0007669"/>
    <property type="project" value="TreeGrafter"/>
</dbReference>
<dbReference type="GO" id="GO:0043022">
    <property type="term" value="F:ribosome binding"/>
    <property type="evidence" value="ECO:0007669"/>
    <property type="project" value="TreeGrafter"/>
</dbReference>
<dbReference type="GO" id="GO:0051083">
    <property type="term" value="P:'de novo' cotranslational protein folding"/>
    <property type="evidence" value="ECO:0007669"/>
    <property type="project" value="TreeGrafter"/>
</dbReference>
<dbReference type="GO" id="GO:0051301">
    <property type="term" value="P:cell division"/>
    <property type="evidence" value="ECO:0007669"/>
    <property type="project" value="UniProtKB-KW"/>
</dbReference>
<dbReference type="GO" id="GO:0061077">
    <property type="term" value="P:chaperone-mediated protein folding"/>
    <property type="evidence" value="ECO:0007669"/>
    <property type="project" value="TreeGrafter"/>
</dbReference>
<dbReference type="GO" id="GO:0015031">
    <property type="term" value="P:protein transport"/>
    <property type="evidence" value="ECO:0007669"/>
    <property type="project" value="UniProtKB-UniRule"/>
</dbReference>
<dbReference type="GO" id="GO:0043335">
    <property type="term" value="P:protein unfolding"/>
    <property type="evidence" value="ECO:0007669"/>
    <property type="project" value="TreeGrafter"/>
</dbReference>
<dbReference type="FunFam" id="3.10.50.40:FF:000001">
    <property type="entry name" value="Trigger factor"/>
    <property type="match status" value="1"/>
</dbReference>
<dbReference type="FunFam" id="3.30.70.1050:FF:000001">
    <property type="entry name" value="Trigger factor"/>
    <property type="match status" value="1"/>
</dbReference>
<dbReference type="Gene3D" id="3.10.50.40">
    <property type="match status" value="1"/>
</dbReference>
<dbReference type="Gene3D" id="3.30.70.1050">
    <property type="entry name" value="Trigger factor ribosome-binding domain"/>
    <property type="match status" value="1"/>
</dbReference>
<dbReference type="Gene3D" id="1.10.3120.10">
    <property type="entry name" value="Trigger factor, C-terminal domain"/>
    <property type="match status" value="1"/>
</dbReference>
<dbReference type="HAMAP" id="MF_00303">
    <property type="entry name" value="Trigger_factor_Tig"/>
    <property type="match status" value="1"/>
</dbReference>
<dbReference type="InterPro" id="IPR046357">
    <property type="entry name" value="PPIase_dom_sf"/>
</dbReference>
<dbReference type="InterPro" id="IPR001179">
    <property type="entry name" value="PPIase_FKBP_dom"/>
</dbReference>
<dbReference type="InterPro" id="IPR005215">
    <property type="entry name" value="Trig_fac"/>
</dbReference>
<dbReference type="InterPro" id="IPR008880">
    <property type="entry name" value="Trigger_fac_C"/>
</dbReference>
<dbReference type="InterPro" id="IPR037041">
    <property type="entry name" value="Trigger_fac_C_sf"/>
</dbReference>
<dbReference type="InterPro" id="IPR008881">
    <property type="entry name" value="Trigger_fac_ribosome-bd_bac"/>
</dbReference>
<dbReference type="InterPro" id="IPR036611">
    <property type="entry name" value="Trigger_fac_ribosome-bd_sf"/>
</dbReference>
<dbReference type="InterPro" id="IPR027304">
    <property type="entry name" value="Trigger_fact/SurA_dom_sf"/>
</dbReference>
<dbReference type="NCBIfam" id="TIGR00115">
    <property type="entry name" value="tig"/>
    <property type="match status" value="1"/>
</dbReference>
<dbReference type="PANTHER" id="PTHR30560">
    <property type="entry name" value="TRIGGER FACTOR CHAPERONE AND PEPTIDYL-PROLYL CIS/TRANS ISOMERASE"/>
    <property type="match status" value="1"/>
</dbReference>
<dbReference type="PANTHER" id="PTHR30560:SF3">
    <property type="entry name" value="TRIGGER FACTOR-LIKE PROTEIN TIG, CHLOROPLASTIC"/>
    <property type="match status" value="1"/>
</dbReference>
<dbReference type="Pfam" id="PF00254">
    <property type="entry name" value="FKBP_C"/>
    <property type="match status" value="1"/>
</dbReference>
<dbReference type="Pfam" id="PF05698">
    <property type="entry name" value="Trigger_C"/>
    <property type="match status" value="1"/>
</dbReference>
<dbReference type="Pfam" id="PF05697">
    <property type="entry name" value="Trigger_N"/>
    <property type="match status" value="1"/>
</dbReference>
<dbReference type="PIRSF" id="PIRSF003095">
    <property type="entry name" value="Trigger_factor"/>
    <property type="match status" value="1"/>
</dbReference>
<dbReference type="SUPFAM" id="SSF54534">
    <property type="entry name" value="FKBP-like"/>
    <property type="match status" value="1"/>
</dbReference>
<dbReference type="SUPFAM" id="SSF109998">
    <property type="entry name" value="Triger factor/SurA peptide-binding domain-like"/>
    <property type="match status" value="1"/>
</dbReference>
<dbReference type="SUPFAM" id="SSF102735">
    <property type="entry name" value="Trigger factor ribosome-binding domain"/>
    <property type="match status" value="1"/>
</dbReference>
<dbReference type="PROSITE" id="PS50059">
    <property type="entry name" value="FKBP_PPIASE"/>
    <property type="match status" value="1"/>
</dbReference>
<sequence length="434" mass="48857">MQVSVETTQGLGRRVTITVPAADIQKAVDSELKKAAKTVRIDGFRKGHVPMSMVKQRYGMSVLNDVLGDLMQRNFINAIIENKVNPVGAPDYKPEQYKEGEDFVYSVEFEVFPEIELKDLESIEVVKPIVTVKDEDVDNMLETLRKQQAEWKDKEGEVAAEDRVTVDFNGSIDGEEFEGGKAEDFVLAMGQGRMIPGFEEGLIGHKAGEEFTIDVTFPEDYHAENLKGKKAQFAINLKKVEERELPELTEEFIKRFGIADGSVDGLRAEVRKNMERELKNAIRTRVKSQVIDGLVKANEVDVPAAAVDSEIEVLQRQAAQRFGGDEKQALQLPRELFEEQAKRRVIVGLLLGEVINSNELKAEDERVKALIDEMASAYEDPSEVVEFYNKNEQLMNNIRNLALEEQAVEKILATAKVTEKETNFTELMNEVQMG</sequence>
<comment type="function">
    <text evidence="1">Involved in protein export. Acts as a chaperone by maintaining the newly synthesized protein in an open conformation. Functions as a peptidyl-prolyl cis-trans isomerase.</text>
</comment>
<comment type="catalytic activity">
    <reaction evidence="1">
        <text>[protein]-peptidylproline (omega=180) = [protein]-peptidylproline (omega=0)</text>
        <dbReference type="Rhea" id="RHEA:16237"/>
        <dbReference type="Rhea" id="RHEA-COMP:10747"/>
        <dbReference type="Rhea" id="RHEA-COMP:10748"/>
        <dbReference type="ChEBI" id="CHEBI:83833"/>
        <dbReference type="ChEBI" id="CHEBI:83834"/>
        <dbReference type="EC" id="5.2.1.8"/>
    </reaction>
</comment>
<comment type="subcellular location">
    <subcellularLocation>
        <location>Cytoplasm</location>
    </subcellularLocation>
    <text evidence="1">About half TF is bound to the ribosome near the polypeptide exit tunnel while the other half is free in the cytoplasm.</text>
</comment>
<comment type="domain">
    <text evidence="1">Consists of 3 domains; the N-terminus binds the ribosome, the middle domain has PPIase activity, while the C-terminus has intrinsic chaperone activity on its own.</text>
</comment>
<comment type="similarity">
    <text evidence="1">Belongs to the FKBP-type PPIase family. Tig subfamily.</text>
</comment>
<protein>
    <recommendedName>
        <fullName evidence="1">Trigger factor</fullName>
        <shortName evidence="1">TF</shortName>
        <ecNumber evidence="1">5.2.1.8</ecNumber>
    </recommendedName>
    <alternativeName>
        <fullName evidence="1">PPIase</fullName>
    </alternativeName>
</protein>
<name>TIG_PROMH</name>
<evidence type="ECO:0000255" key="1">
    <source>
        <dbReference type="HAMAP-Rule" id="MF_00303"/>
    </source>
</evidence>
<accession>B4EU52</accession>
<organism>
    <name type="scientific">Proteus mirabilis (strain HI4320)</name>
    <dbReference type="NCBI Taxonomy" id="529507"/>
    <lineage>
        <taxon>Bacteria</taxon>
        <taxon>Pseudomonadati</taxon>
        <taxon>Pseudomonadota</taxon>
        <taxon>Gammaproteobacteria</taxon>
        <taxon>Enterobacterales</taxon>
        <taxon>Morganellaceae</taxon>
        <taxon>Proteus</taxon>
    </lineage>
</organism>